<accession>A4G919</accession>
<reference key="1">
    <citation type="journal article" date="2007" name="PLoS Genet.">
        <title>A tale of two oxidation states: bacterial colonization of arsenic-rich environments.</title>
        <authorList>
            <person name="Muller D."/>
            <person name="Medigue C."/>
            <person name="Koechler S."/>
            <person name="Barbe V."/>
            <person name="Barakat M."/>
            <person name="Talla E."/>
            <person name="Bonnefoy V."/>
            <person name="Krin E."/>
            <person name="Arsene-Ploetze F."/>
            <person name="Carapito C."/>
            <person name="Chandler M."/>
            <person name="Cournoyer B."/>
            <person name="Cruveiller S."/>
            <person name="Dossat C."/>
            <person name="Duval S."/>
            <person name="Heymann M."/>
            <person name="Leize E."/>
            <person name="Lieutaud A."/>
            <person name="Lievremont D."/>
            <person name="Makita Y."/>
            <person name="Mangenot S."/>
            <person name="Nitschke W."/>
            <person name="Ortet P."/>
            <person name="Perdrial N."/>
            <person name="Schoepp B."/>
            <person name="Siguier P."/>
            <person name="Simeonova D.D."/>
            <person name="Rouy Z."/>
            <person name="Segurens B."/>
            <person name="Turlin E."/>
            <person name="Vallenet D."/>
            <person name="van Dorsselaer A."/>
            <person name="Weiss S."/>
            <person name="Weissenbach J."/>
            <person name="Lett M.-C."/>
            <person name="Danchin A."/>
            <person name="Bertin P.N."/>
        </authorList>
    </citation>
    <scope>NUCLEOTIDE SEQUENCE [LARGE SCALE GENOMIC DNA]</scope>
    <source>
        <strain>ULPAs1</strain>
    </source>
</reference>
<sequence>MVRTLNNCPAPAKLNLFLHVTGRRADGYHLLQSVFQLIDRGDVLHFSVRDDGLIHRSTELAGVPADSDLVVRAARLLQTEAKKQGKTPGADIAIEKKLPMGGGLGGGSSDAATTLLALNHLWQTGLTRAELMALGLQLGADVPFFLFGQNAFAEGIGEALMAVKTPESWFLVIEPGVSVPTQQIFSSLELTRDTKPVKISDFSRAQESFGKNDLQVVAANLFPPIADAIKWLQQFGDARMTGSGACVFCPFKEEQQVDAVLATVPQQWKAWKAKAITHHPLAYLAT</sequence>
<evidence type="ECO:0000255" key="1">
    <source>
        <dbReference type="HAMAP-Rule" id="MF_00061"/>
    </source>
</evidence>
<dbReference type="EC" id="2.7.1.148" evidence="1"/>
<dbReference type="EMBL" id="CU207211">
    <property type="protein sequence ID" value="CAL63006.1"/>
    <property type="molecule type" value="Genomic_DNA"/>
</dbReference>
<dbReference type="SMR" id="A4G919"/>
<dbReference type="STRING" id="204773.HEAR2892"/>
<dbReference type="KEGG" id="har:HEAR2892"/>
<dbReference type="eggNOG" id="COG1947">
    <property type="taxonomic scope" value="Bacteria"/>
</dbReference>
<dbReference type="HOGENOM" id="CLU_053057_3_0_4"/>
<dbReference type="OrthoDB" id="9809438at2"/>
<dbReference type="UniPathway" id="UPA00056">
    <property type="reaction ID" value="UER00094"/>
</dbReference>
<dbReference type="Proteomes" id="UP000006697">
    <property type="component" value="Chromosome"/>
</dbReference>
<dbReference type="GO" id="GO:0050515">
    <property type="term" value="F:4-(cytidine 5'-diphospho)-2-C-methyl-D-erythritol kinase activity"/>
    <property type="evidence" value="ECO:0007669"/>
    <property type="project" value="UniProtKB-UniRule"/>
</dbReference>
<dbReference type="GO" id="GO:0005524">
    <property type="term" value="F:ATP binding"/>
    <property type="evidence" value="ECO:0007669"/>
    <property type="project" value="UniProtKB-UniRule"/>
</dbReference>
<dbReference type="GO" id="GO:0019288">
    <property type="term" value="P:isopentenyl diphosphate biosynthetic process, methylerythritol 4-phosphate pathway"/>
    <property type="evidence" value="ECO:0007669"/>
    <property type="project" value="UniProtKB-UniRule"/>
</dbReference>
<dbReference type="GO" id="GO:0016114">
    <property type="term" value="P:terpenoid biosynthetic process"/>
    <property type="evidence" value="ECO:0007669"/>
    <property type="project" value="InterPro"/>
</dbReference>
<dbReference type="Gene3D" id="3.30.230.10">
    <property type="match status" value="1"/>
</dbReference>
<dbReference type="Gene3D" id="3.30.70.890">
    <property type="entry name" value="GHMP kinase, C-terminal domain"/>
    <property type="match status" value="1"/>
</dbReference>
<dbReference type="HAMAP" id="MF_00061">
    <property type="entry name" value="IspE"/>
    <property type="match status" value="1"/>
</dbReference>
<dbReference type="InterPro" id="IPR013750">
    <property type="entry name" value="GHMP_kinase_C_dom"/>
</dbReference>
<dbReference type="InterPro" id="IPR036554">
    <property type="entry name" value="GHMP_kinase_C_sf"/>
</dbReference>
<dbReference type="InterPro" id="IPR006204">
    <property type="entry name" value="GHMP_kinase_N_dom"/>
</dbReference>
<dbReference type="InterPro" id="IPR004424">
    <property type="entry name" value="IspE"/>
</dbReference>
<dbReference type="InterPro" id="IPR020568">
    <property type="entry name" value="Ribosomal_Su5_D2-typ_SF"/>
</dbReference>
<dbReference type="InterPro" id="IPR014721">
    <property type="entry name" value="Ribsml_uS5_D2-typ_fold_subgr"/>
</dbReference>
<dbReference type="NCBIfam" id="TIGR00154">
    <property type="entry name" value="ispE"/>
    <property type="match status" value="1"/>
</dbReference>
<dbReference type="NCBIfam" id="NF011202">
    <property type="entry name" value="PRK14608.1"/>
    <property type="match status" value="1"/>
</dbReference>
<dbReference type="PANTHER" id="PTHR43527">
    <property type="entry name" value="4-DIPHOSPHOCYTIDYL-2-C-METHYL-D-ERYTHRITOL KINASE, CHLOROPLASTIC"/>
    <property type="match status" value="1"/>
</dbReference>
<dbReference type="PANTHER" id="PTHR43527:SF2">
    <property type="entry name" value="4-DIPHOSPHOCYTIDYL-2-C-METHYL-D-ERYTHRITOL KINASE, CHLOROPLASTIC"/>
    <property type="match status" value="1"/>
</dbReference>
<dbReference type="Pfam" id="PF08544">
    <property type="entry name" value="GHMP_kinases_C"/>
    <property type="match status" value="1"/>
</dbReference>
<dbReference type="Pfam" id="PF00288">
    <property type="entry name" value="GHMP_kinases_N"/>
    <property type="match status" value="1"/>
</dbReference>
<dbReference type="PIRSF" id="PIRSF010376">
    <property type="entry name" value="IspE"/>
    <property type="match status" value="1"/>
</dbReference>
<dbReference type="SUPFAM" id="SSF55060">
    <property type="entry name" value="GHMP Kinase, C-terminal domain"/>
    <property type="match status" value="1"/>
</dbReference>
<dbReference type="SUPFAM" id="SSF54211">
    <property type="entry name" value="Ribosomal protein S5 domain 2-like"/>
    <property type="match status" value="1"/>
</dbReference>
<organism>
    <name type="scientific">Herminiimonas arsenicoxydans</name>
    <dbReference type="NCBI Taxonomy" id="204773"/>
    <lineage>
        <taxon>Bacteria</taxon>
        <taxon>Pseudomonadati</taxon>
        <taxon>Pseudomonadota</taxon>
        <taxon>Betaproteobacteria</taxon>
        <taxon>Burkholderiales</taxon>
        <taxon>Oxalobacteraceae</taxon>
        <taxon>Herminiimonas</taxon>
    </lineage>
</organism>
<name>ISPE_HERAR</name>
<feature type="chain" id="PRO_0000335717" description="4-diphosphocytidyl-2-C-methyl-D-erythritol kinase">
    <location>
        <begin position="1"/>
        <end position="286"/>
    </location>
</feature>
<feature type="active site" evidence="1">
    <location>
        <position position="13"/>
    </location>
</feature>
<feature type="active site" evidence="1">
    <location>
        <position position="141"/>
    </location>
</feature>
<feature type="binding site" evidence="1">
    <location>
        <begin position="99"/>
        <end position="109"/>
    </location>
    <ligand>
        <name>ATP</name>
        <dbReference type="ChEBI" id="CHEBI:30616"/>
    </ligand>
</feature>
<keyword id="KW-0067">ATP-binding</keyword>
<keyword id="KW-0414">Isoprene biosynthesis</keyword>
<keyword id="KW-0418">Kinase</keyword>
<keyword id="KW-0547">Nucleotide-binding</keyword>
<keyword id="KW-1185">Reference proteome</keyword>
<keyword id="KW-0808">Transferase</keyword>
<protein>
    <recommendedName>
        <fullName evidence="1">4-diphosphocytidyl-2-C-methyl-D-erythritol kinase</fullName>
        <shortName evidence="1">CMK</shortName>
        <ecNumber evidence="1">2.7.1.148</ecNumber>
    </recommendedName>
    <alternativeName>
        <fullName evidence="1">4-(cytidine-5'-diphospho)-2-C-methyl-D-erythritol kinase</fullName>
    </alternativeName>
</protein>
<proteinExistence type="inferred from homology"/>
<gene>
    <name evidence="1" type="primary">ispE</name>
    <name type="ordered locus">HEAR2892</name>
</gene>
<comment type="function">
    <text evidence="1">Catalyzes the phosphorylation of the position 2 hydroxy group of 4-diphosphocytidyl-2C-methyl-D-erythritol.</text>
</comment>
<comment type="catalytic activity">
    <reaction evidence="1">
        <text>4-CDP-2-C-methyl-D-erythritol + ATP = 4-CDP-2-C-methyl-D-erythritol 2-phosphate + ADP + H(+)</text>
        <dbReference type="Rhea" id="RHEA:18437"/>
        <dbReference type="ChEBI" id="CHEBI:15378"/>
        <dbReference type="ChEBI" id="CHEBI:30616"/>
        <dbReference type="ChEBI" id="CHEBI:57823"/>
        <dbReference type="ChEBI" id="CHEBI:57919"/>
        <dbReference type="ChEBI" id="CHEBI:456216"/>
        <dbReference type="EC" id="2.7.1.148"/>
    </reaction>
</comment>
<comment type="pathway">
    <text evidence="1">Isoprenoid biosynthesis; isopentenyl diphosphate biosynthesis via DXP pathway; isopentenyl diphosphate from 1-deoxy-D-xylulose 5-phosphate: step 3/6.</text>
</comment>
<comment type="similarity">
    <text evidence="1">Belongs to the GHMP kinase family. IspE subfamily.</text>
</comment>